<keyword id="KW-0066">ATP synthesis</keyword>
<keyword id="KW-0138">CF(0)</keyword>
<keyword id="KW-0375">Hydrogen ion transport</keyword>
<keyword id="KW-0406">Ion transport</keyword>
<keyword id="KW-0472">Membrane</keyword>
<keyword id="KW-0793">Thylakoid</keyword>
<keyword id="KW-0812">Transmembrane</keyword>
<keyword id="KW-1133">Transmembrane helix</keyword>
<keyword id="KW-0813">Transport</keyword>
<sequence length="241" mass="27248">MLLNSLSTNFAALEVGQHLYWQIGNIRLHGQVFLTSWILLGSLLVFISLGTKKMENDPKGLQNLLEFLWDYIRDLARTQIGEKVYRDWMPFIGTLFLFVFVSNWGGALIPWRLIKLPSGELGAPTADINTTIALALLVSLSYFYAGLSNKGWRYFEYYVHPTPIMLPFKILEDFTKPLSLSFRLFGNILADELVVGVLVFLVPLVLPIPVMFLGLFTSAIQALIFATLAAYYIGEAVEEHH</sequence>
<name>ATP6_PROM5</name>
<evidence type="ECO:0000255" key="1">
    <source>
        <dbReference type="HAMAP-Rule" id="MF_01393"/>
    </source>
</evidence>
<evidence type="ECO:0000305" key="2"/>
<gene>
    <name evidence="1" type="primary">atpB</name>
    <name evidence="1" type="synonym">atpI</name>
    <name type="ordered locus">P9515_16351</name>
</gene>
<protein>
    <recommendedName>
        <fullName evidence="1">ATP synthase subunit a</fullName>
    </recommendedName>
    <alternativeName>
        <fullName evidence="1">ATP synthase F0 sector subunit a</fullName>
    </alternativeName>
    <alternativeName>
        <fullName evidence="1">F-ATPase subunit 6</fullName>
    </alternativeName>
</protein>
<proteinExistence type="inferred from homology"/>
<dbReference type="EMBL" id="CP000552">
    <property type="protein sequence ID" value="ABM72842.1"/>
    <property type="status" value="ALT_INIT"/>
    <property type="molecule type" value="Genomic_DNA"/>
</dbReference>
<dbReference type="RefSeq" id="WP_041710653.1">
    <property type="nucleotide sequence ID" value="NC_008817.1"/>
</dbReference>
<dbReference type="SMR" id="A2BYI1"/>
<dbReference type="STRING" id="167542.P9515_16351"/>
<dbReference type="GeneID" id="60201728"/>
<dbReference type="KEGG" id="pmc:P9515_16351"/>
<dbReference type="eggNOG" id="COG0356">
    <property type="taxonomic scope" value="Bacteria"/>
</dbReference>
<dbReference type="HOGENOM" id="CLU_041018_2_2_3"/>
<dbReference type="OrthoDB" id="9789241at2"/>
<dbReference type="Proteomes" id="UP000001589">
    <property type="component" value="Chromosome"/>
</dbReference>
<dbReference type="GO" id="GO:0031676">
    <property type="term" value="C:plasma membrane-derived thylakoid membrane"/>
    <property type="evidence" value="ECO:0007669"/>
    <property type="project" value="UniProtKB-SubCell"/>
</dbReference>
<dbReference type="GO" id="GO:0045259">
    <property type="term" value="C:proton-transporting ATP synthase complex"/>
    <property type="evidence" value="ECO:0007669"/>
    <property type="project" value="UniProtKB-KW"/>
</dbReference>
<dbReference type="GO" id="GO:0046933">
    <property type="term" value="F:proton-transporting ATP synthase activity, rotational mechanism"/>
    <property type="evidence" value="ECO:0007669"/>
    <property type="project" value="UniProtKB-UniRule"/>
</dbReference>
<dbReference type="CDD" id="cd00310">
    <property type="entry name" value="ATP-synt_Fo_a_6"/>
    <property type="match status" value="1"/>
</dbReference>
<dbReference type="FunFam" id="1.20.120.220:FF:000001">
    <property type="entry name" value="ATP synthase subunit a, chloroplastic"/>
    <property type="match status" value="1"/>
</dbReference>
<dbReference type="Gene3D" id="1.20.120.220">
    <property type="entry name" value="ATP synthase, F0 complex, subunit A"/>
    <property type="match status" value="1"/>
</dbReference>
<dbReference type="HAMAP" id="MF_01393">
    <property type="entry name" value="ATP_synth_a_bact"/>
    <property type="match status" value="1"/>
</dbReference>
<dbReference type="InterPro" id="IPR045082">
    <property type="entry name" value="ATP_syn_F0_a_bact/chloroplast"/>
</dbReference>
<dbReference type="InterPro" id="IPR000568">
    <property type="entry name" value="ATP_synth_F0_asu"/>
</dbReference>
<dbReference type="InterPro" id="IPR023011">
    <property type="entry name" value="ATP_synth_F0_asu_AS"/>
</dbReference>
<dbReference type="InterPro" id="IPR035908">
    <property type="entry name" value="F0_ATP_A_sf"/>
</dbReference>
<dbReference type="NCBIfam" id="TIGR01131">
    <property type="entry name" value="ATP_synt_6_or_A"/>
    <property type="match status" value="1"/>
</dbReference>
<dbReference type="PANTHER" id="PTHR42823">
    <property type="entry name" value="ATP SYNTHASE SUBUNIT A, CHLOROPLASTIC"/>
    <property type="match status" value="1"/>
</dbReference>
<dbReference type="PANTHER" id="PTHR42823:SF3">
    <property type="entry name" value="ATP SYNTHASE SUBUNIT A, CHLOROPLASTIC"/>
    <property type="match status" value="1"/>
</dbReference>
<dbReference type="Pfam" id="PF00119">
    <property type="entry name" value="ATP-synt_A"/>
    <property type="match status" value="1"/>
</dbReference>
<dbReference type="PRINTS" id="PR00123">
    <property type="entry name" value="ATPASEA"/>
</dbReference>
<dbReference type="SUPFAM" id="SSF81336">
    <property type="entry name" value="F1F0 ATP synthase subunit A"/>
    <property type="match status" value="1"/>
</dbReference>
<dbReference type="PROSITE" id="PS00449">
    <property type="entry name" value="ATPASE_A"/>
    <property type="match status" value="1"/>
</dbReference>
<accession>A2BYI1</accession>
<feature type="chain" id="PRO_0000362382" description="ATP synthase subunit a">
    <location>
        <begin position="1"/>
        <end position="241"/>
    </location>
</feature>
<feature type="transmembrane region" description="Helical" evidence="1">
    <location>
        <begin position="30"/>
        <end position="50"/>
    </location>
</feature>
<feature type="transmembrane region" description="Helical" evidence="1">
    <location>
        <begin position="91"/>
        <end position="111"/>
    </location>
</feature>
<feature type="transmembrane region" description="Helical" evidence="1">
    <location>
        <begin position="128"/>
        <end position="148"/>
    </location>
</feature>
<feature type="transmembrane region" description="Helical" evidence="1">
    <location>
        <begin position="193"/>
        <end position="213"/>
    </location>
</feature>
<feature type="transmembrane region" description="Helical" evidence="1">
    <location>
        <begin position="214"/>
        <end position="234"/>
    </location>
</feature>
<organism>
    <name type="scientific">Prochlorococcus marinus (strain MIT 9515)</name>
    <dbReference type="NCBI Taxonomy" id="167542"/>
    <lineage>
        <taxon>Bacteria</taxon>
        <taxon>Bacillati</taxon>
        <taxon>Cyanobacteriota</taxon>
        <taxon>Cyanophyceae</taxon>
        <taxon>Synechococcales</taxon>
        <taxon>Prochlorococcaceae</taxon>
        <taxon>Prochlorococcus</taxon>
    </lineage>
</organism>
<comment type="function">
    <text evidence="1">Key component of the proton channel; it plays a direct role in the translocation of protons across the membrane.</text>
</comment>
<comment type="subunit">
    <text evidence="1">F-type ATPases have 2 components, CF(1) - the catalytic core - and CF(0) - the membrane proton channel. CF(1) has five subunits: alpha(3), beta(3), gamma(1), delta(1), epsilon(1). CF(0) has four main subunits: a, b, b' and c.</text>
</comment>
<comment type="subcellular location">
    <subcellularLocation>
        <location evidence="1">Cellular thylakoid membrane</location>
        <topology evidence="1">Multi-pass membrane protein</topology>
    </subcellularLocation>
</comment>
<comment type="similarity">
    <text evidence="1">Belongs to the ATPase A chain family.</text>
</comment>
<comment type="sequence caution" evidence="2">
    <conflict type="erroneous initiation">
        <sequence resource="EMBL-CDS" id="ABM72842"/>
    </conflict>
</comment>
<reference key="1">
    <citation type="journal article" date="2007" name="PLoS Genet.">
        <title>Patterns and implications of gene gain and loss in the evolution of Prochlorococcus.</title>
        <authorList>
            <person name="Kettler G.C."/>
            <person name="Martiny A.C."/>
            <person name="Huang K."/>
            <person name="Zucker J."/>
            <person name="Coleman M.L."/>
            <person name="Rodrigue S."/>
            <person name="Chen F."/>
            <person name="Lapidus A."/>
            <person name="Ferriera S."/>
            <person name="Johnson J."/>
            <person name="Steglich C."/>
            <person name="Church G.M."/>
            <person name="Richardson P."/>
            <person name="Chisholm S.W."/>
        </authorList>
    </citation>
    <scope>NUCLEOTIDE SEQUENCE [LARGE SCALE GENOMIC DNA]</scope>
    <source>
        <strain>MIT 9515</strain>
    </source>
</reference>